<gene>
    <name evidence="1" type="primary">thiM</name>
    <name type="ordered locus">VPA0131</name>
</gene>
<evidence type="ECO:0000255" key="1">
    <source>
        <dbReference type="HAMAP-Rule" id="MF_00228"/>
    </source>
</evidence>
<organism>
    <name type="scientific">Vibrio parahaemolyticus serotype O3:K6 (strain RIMD 2210633)</name>
    <dbReference type="NCBI Taxonomy" id="223926"/>
    <lineage>
        <taxon>Bacteria</taxon>
        <taxon>Pseudomonadati</taxon>
        <taxon>Pseudomonadota</taxon>
        <taxon>Gammaproteobacteria</taxon>
        <taxon>Vibrionales</taxon>
        <taxon>Vibrionaceae</taxon>
        <taxon>Vibrio</taxon>
    </lineage>
</organism>
<feature type="chain" id="PRO_0000156966" description="Hydroxyethylthiazole kinase">
    <location>
        <begin position="1"/>
        <end position="263"/>
    </location>
</feature>
<feature type="binding site" evidence="1">
    <location>
        <position position="45"/>
    </location>
    <ligand>
        <name>substrate</name>
    </ligand>
</feature>
<feature type="binding site" evidence="1">
    <location>
        <position position="121"/>
    </location>
    <ligand>
        <name>ATP</name>
        <dbReference type="ChEBI" id="CHEBI:30616"/>
    </ligand>
</feature>
<feature type="binding site" evidence="1">
    <location>
        <position position="167"/>
    </location>
    <ligand>
        <name>ATP</name>
        <dbReference type="ChEBI" id="CHEBI:30616"/>
    </ligand>
</feature>
<feature type="binding site" evidence="1">
    <location>
        <position position="194"/>
    </location>
    <ligand>
        <name>substrate</name>
    </ligand>
</feature>
<proteinExistence type="inferred from homology"/>
<comment type="function">
    <text evidence="1">Catalyzes the phosphorylation of the hydroxyl group of 4-methyl-5-beta-hydroxyethylthiazole (THZ).</text>
</comment>
<comment type="catalytic activity">
    <reaction evidence="1">
        <text>5-(2-hydroxyethyl)-4-methylthiazole + ATP = 4-methyl-5-(2-phosphooxyethyl)-thiazole + ADP + H(+)</text>
        <dbReference type="Rhea" id="RHEA:24212"/>
        <dbReference type="ChEBI" id="CHEBI:15378"/>
        <dbReference type="ChEBI" id="CHEBI:17957"/>
        <dbReference type="ChEBI" id="CHEBI:30616"/>
        <dbReference type="ChEBI" id="CHEBI:58296"/>
        <dbReference type="ChEBI" id="CHEBI:456216"/>
        <dbReference type="EC" id="2.7.1.50"/>
    </reaction>
</comment>
<comment type="cofactor">
    <cofactor evidence="1">
        <name>Mg(2+)</name>
        <dbReference type="ChEBI" id="CHEBI:18420"/>
    </cofactor>
</comment>
<comment type="pathway">
    <text evidence="1">Cofactor biosynthesis; thiamine diphosphate biosynthesis; 4-methyl-5-(2-phosphoethyl)-thiazole from 5-(2-hydroxyethyl)-4-methylthiazole: step 1/1.</text>
</comment>
<comment type="similarity">
    <text evidence="1">Belongs to the Thz kinase family.</text>
</comment>
<dbReference type="EC" id="2.7.1.50" evidence="1"/>
<dbReference type="EMBL" id="BA000032">
    <property type="protein sequence ID" value="BAC61474.1"/>
    <property type="molecule type" value="Genomic_DNA"/>
</dbReference>
<dbReference type="RefSeq" id="NP_799641.1">
    <property type="nucleotide sequence ID" value="NC_004605.1"/>
</dbReference>
<dbReference type="RefSeq" id="WP_005482855.1">
    <property type="nucleotide sequence ID" value="NC_004605.1"/>
</dbReference>
<dbReference type="SMR" id="Q87JW7"/>
<dbReference type="GeneID" id="1190810"/>
<dbReference type="KEGG" id="vpa:VPA0131"/>
<dbReference type="PATRIC" id="fig|223926.6.peg.3091"/>
<dbReference type="eggNOG" id="COG2145">
    <property type="taxonomic scope" value="Bacteria"/>
</dbReference>
<dbReference type="HOGENOM" id="CLU_019943_0_1_6"/>
<dbReference type="UniPathway" id="UPA00060">
    <property type="reaction ID" value="UER00139"/>
</dbReference>
<dbReference type="Proteomes" id="UP000002493">
    <property type="component" value="Chromosome 2"/>
</dbReference>
<dbReference type="GO" id="GO:0005524">
    <property type="term" value="F:ATP binding"/>
    <property type="evidence" value="ECO:0007669"/>
    <property type="project" value="UniProtKB-UniRule"/>
</dbReference>
<dbReference type="GO" id="GO:0004417">
    <property type="term" value="F:hydroxyethylthiazole kinase activity"/>
    <property type="evidence" value="ECO:0007669"/>
    <property type="project" value="UniProtKB-UniRule"/>
</dbReference>
<dbReference type="GO" id="GO:0000287">
    <property type="term" value="F:magnesium ion binding"/>
    <property type="evidence" value="ECO:0007669"/>
    <property type="project" value="UniProtKB-UniRule"/>
</dbReference>
<dbReference type="GO" id="GO:0009228">
    <property type="term" value="P:thiamine biosynthetic process"/>
    <property type="evidence" value="ECO:0007669"/>
    <property type="project" value="UniProtKB-KW"/>
</dbReference>
<dbReference type="GO" id="GO:0009229">
    <property type="term" value="P:thiamine diphosphate biosynthetic process"/>
    <property type="evidence" value="ECO:0007669"/>
    <property type="project" value="UniProtKB-UniRule"/>
</dbReference>
<dbReference type="CDD" id="cd01170">
    <property type="entry name" value="THZ_kinase"/>
    <property type="match status" value="1"/>
</dbReference>
<dbReference type="Gene3D" id="3.40.1190.20">
    <property type="match status" value="1"/>
</dbReference>
<dbReference type="HAMAP" id="MF_00228">
    <property type="entry name" value="Thz_kinase"/>
    <property type="match status" value="1"/>
</dbReference>
<dbReference type="InterPro" id="IPR000417">
    <property type="entry name" value="Hyethyz_kinase"/>
</dbReference>
<dbReference type="InterPro" id="IPR029056">
    <property type="entry name" value="Ribokinase-like"/>
</dbReference>
<dbReference type="NCBIfam" id="NF006830">
    <property type="entry name" value="PRK09355.1"/>
    <property type="match status" value="1"/>
</dbReference>
<dbReference type="NCBIfam" id="TIGR00694">
    <property type="entry name" value="thiM"/>
    <property type="match status" value="1"/>
</dbReference>
<dbReference type="Pfam" id="PF02110">
    <property type="entry name" value="HK"/>
    <property type="match status" value="1"/>
</dbReference>
<dbReference type="PIRSF" id="PIRSF000513">
    <property type="entry name" value="Thz_kinase"/>
    <property type="match status" value="1"/>
</dbReference>
<dbReference type="PRINTS" id="PR01099">
    <property type="entry name" value="HYETHTZKNASE"/>
</dbReference>
<dbReference type="SUPFAM" id="SSF53613">
    <property type="entry name" value="Ribokinase-like"/>
    <property type="match status" value="1"/>
</dbReference>
<accession>Q87JW7</accession>
<sequence length="263" mass="27731">MLIEQITQALTAVRQQKPLVVNITNYVVMNNTANALLAIGASPIMAHSKQEMAEMMSFAGALVINIGTLDSVWTPRMSYAVEQANSNGKIVVLDPVGCGASSLRTETSREIARLANKLIIRGNASEIIALAGEQAQSKGVDALDSSDAALGAAHFLVKEYGASVVISGETDYIVTKEQTVQLNNGHEMMPYVTGMGCTLTALTGAFAAIGDETGLAAAAVLGVVGEIAAEQARGPGSLQMHLLDELYQLDEETLATRLKLQVR</sequence>
<keyword id="KW-0067">ATP-binding</keyword>
<keyword id="KW-0418">Kinase</keyword>
<keyword id="KW-0460">Magnesium</keyword>
<keyword id="KW-0479">Metal-binding</keyword>
<keyword id="KW-0547">Nucleotide-binding</keyword>
<keyword id="KW-0784">Thiamine biosynthesis</keyword>
<keyword id="KW-0808">Transferase</keyword>
<protein>
    <recommendedName>
        <fullName evidence="1">Hydroxyethylthiazole kinase</fullName>
        <ecNumber evidence="1">2.7.1.50</ecNumber>
    </recommendedName>
    <alternativeName>
        <fullName evidence="1">4-methyl-5-beta-hydroxyethylthiazole kinase</fullName>
        <shortName evidence="1">TH kinase</shortName>
        <shortName evidence="1">Thz kinase</shortName>
    </alternativeName>
</protein>
<name>THIM_VIBPA</name>
<reference key="1">
    <citation type="journal article" date="2003" name="Lancet">
        <title>Genome sequence of Vibrio parahaemolyticus: a pathogenic mechanism distinct from that of V. cholerae.</title>
        <authorList>
            <person name="Makino K."/>
            <person name="Oshima K."/>
            <person name="Kurokawa K."/>
            <person name="Yokoyama K."/>
            <person name="Uda T."/>
            <person name="Tagomori K."/>
            <person name="Iijima Y."/>
            <person name="Najima M."/>
            <person name="Nakano M."/>
            <person name="Yamashita A."/>
            <person name="Kubota Y."/>
            <person name="Kimura S."/>
            <person name="Yasunaga T."/>
            <person name="Honda T."/>
            <person name="Shinagawa H."/>
            <person name="Hattori M."/>
            <person name="Iida T."/>
        </authorList>
    </citation>
    <scope>NUCLEOTIDE SEQUENCE [LARGE SCALE GENOMIC DNA]</scope>
    <source>
        <strain>RIMD 2210633</strain>
    </source>
</reference>